<organism>
    <name type="scientific">Escherichia coli (strain K12)</name>
    <dbReference type="NCBI Taxonomy" id="83333"/>
    <lineage>
        <taxon>Bacteria</taxon>
        <taxon>Pseudomonadati</taxon>
        <taxon>Pseudomonadota</taxon>
        <taxon>Gammaproteobacteria</taxon>
        <taxon>Enterobacterales</taxon>
        <taxon>Enterobacteriaceae</taxon>
        <taxon>Escherichia</taxon>
    </lineage>
</organism>
<gene>
    <name type="primary">torT</name>
    <name type="synonym">yccH</name>
    <name type="ordered locus">b0994</name>
    <name type="ordered locus">JW0979</name>
</gene>
<keyword id="KW-0903">Direct protein sequencing</keyword>
<keyword id="KW-0574">Periplasm</keyword>
<keyword id="KW-1185">Reference proteome</keyword>
<keyword id="KW-0732">Signal</keyword>
<keyword id="KW-0813">Transport</keyword>
<evidence type="ECO:0000269" key="1">
    <source>
    </source>
</evidence>
<evidence type="ECO:0000305" key="2"/>
<feature type="signal peptide" evidence="1">
    <location>
        <begin position="1"/>
        <end position="18"/>
    </location>
</feature>
<feature type="chain" id="PRO_0000031736" description="Periplasmic protein TorT">
    <location>
        <begin position="19"/>
        <end position="342"/>
    </location>
</feature>
<feature type="sequence conflict" description="In Ref. 1; CAA63921." evidence="2" ref="1">
    <original>W</original>
    <variation>S</variation>
    <location>
        <position position="59"/>
    </location>
</feature>
<feature type="sequence conflict" description="In Ref. 1; CAA63921." evidence="2" ref="1">
    <original>A</original>
    <variation>R</variation>
    <location>
        <position position="230"/>
    </location>
</feature>
<sequence>MRVLLFLLLSLFMLPAFSADNLLRWHDAQHFTVQASTPLKAKRAWKLCALYPSLKDSYWLSLNYGMQEAARRYGVDLKVLEAGGYSQLATQQAQIDQCKQWGAEAILLGSSTTSFPDLQKQVASLPVIELVNAIDAPQVKSRVGVPWFQMGYQPGRYLVQWAHGKPLNVLLMPGPDNAGGSKEMVEGFRAAIAGSPVRIVDIALGDNDIEIQRNLLQEMLERHPEIDVVAGTAIAAEAAMGEGRNLKTPLTVVSFYLSHQVYRGLKRGRVIMAASDQMVWQGELAVEQAIRQLQGQSVSDNVSPPILVLTPKNADREHIRRSLSPGGFRPVYFYQHTSAAKK</sequence>
<proteinExistence type="evidence at protein level"/>
<protein>
    <recommendedName>
        <fullName>Periplasmic protein TorT</fullName>
    </recommendedName>
</protein>
<name>TORT_ECOLI</name>
<dbReference type="EMBL" id="X94231">
    <property type="protein sequence ID" value="CAA63921.1"/>
    <property type="molecule type" value="Genomic_DNA"/>
</dbReference>
<dbReference type="EMBL" id="U00096">
    <property type="protein sequence ID" value="AAC74079.1"/>
    <property type="molecule type" value="Genomic_DNA"/>
</dbReference>
<dbReference type="EMBL" id="AP009048">
    <property type="protein sequence ID" value="BAA36136.1"/>
    <property type="molecule type" value="Genomic_DNA"/>
</dbReference>
<dbReference type="PIR" id="H64840">
    <property type="entry name" value="H64840"/>
</dbReference>
<dbReference type="RefSeq" id="NP_415514.1">
    <property type="nucleotide sequence ID" value="NC_000913.3"/>
</dbReference>
<dbReference type="RefSeq" id="WP_001264933.1">
    <property type="nucleotide sequence ID" value="NZ_STEB01000006.1"/>
</dbReference>
<dbReference type="SMR" id="P38683"/>
<dbReference type="BioGRID" id="4262840">
    <property type="interactions" value="338"/>
</dbReference>
<dbReference type="FunCoup" id="P38683">
    <property type="interactions" value="91"/>
</dbReference>
<dbReference type="STRING" id="511145.b0994"/>
<dbReference type="PaxDb" id="511145-b0994"/>
<dbReference type="EnsemblBacteria" id="AAC74079">
    <property type="protein sequence ID" value="AAC74079"/>
    <property type="gene ID" value="b0994"/>
</dbReference>
<dbReference type="GeneID" id="946289"/>
<dbReference type="KEGG" id="ecj:JW0979"/>
<dbReference type="KEGG" id="eco:b0994"/>
<dbReference type="KEGG" id="ecoc:C3026_06060"/>
<dbReference type="PATRIC" id="fig|1411691.4.peg.1277"/>
<dbReference type="EchoBASE" id="EB2500"/>
<dbReference type="eggNOG" id="COG1879">
    <property type="taxonomic scope" value="Bacteria"/>
</dbReference>
<dbReference type="HOGENOM" id="CLU_053104_0_0_6"/>
<dbReference type="InParanoid" id="P38683"/>
<dbReference type="OMA" id="SEYRPTF"/>
<dbReference type="OrthoDB" id="9773673at2"/>
<dbReference type="PhylomeDB" id="P38683"/>
<dbReference type="BioCyc" id="EcoCyc:TORT-MONOMER"/>
<dbReference type="PRO" id="PR:P38683"/>
<dbReference type="Proteomes" id="UP000000625">
    <property type="component" value="Chromosome"/>
</dbReference>
<dbReference type="GO" id="GO:0042597">
    <property type="term" value="C:periplasmic space"/>
    <property type="evidence" value="ECO:0007669"/>
    <property type="project" value="UniProtKB-SubCell"/>
</dbReference>
<dbReference type="GO" id="GO:0003700">
    <property type="term" value="F:DNA-binding transcription factor activity"/>
    <property type="evidence" value="ECO:0000318"/>
    <property type="project" value="GO_Central"/>
</dbReference>
<dbReference type="GO" id="GO:0000976">
    <property type="term" value="F:transcription cis-regulatory region binding"/>
    <property type="evidence" value="ECO:0000318"/>
    <property type="project" value="GO_Central"/>
</dbReference>
<dbReference type="GO" id="GO:0009061">
    <property type="term" value="P:anaerobic respiration"/>
    <property type="evidence" value="ECO:0000315"/>
    <property type="project" value="EcoCyc"/>
</dbReference>
<dbReference type="GO" id="GO:0006355">
    <property type="term" value="P:regulation of DNA-templated transcription"/>
    <property type="evidence" value="ECO:0000318"/>
    <property type="project" value="GO_Central"/>
</dbReference>
<dbReference type="CDD" id="cd06306">
    <property type="entry name" value="PBP1_TorT-like"/>
    <property type="match status" value="1"/>
</dbReference>
<dbReference type="Gene3D" id="3.40.50.2300">
    <property type="match status" value="2"/>
</dbReference>
<dbReference type="InterPro" id="IPR001761">
    <property type="entry name" value="Peripla_BP/Lac1_sug-bd_dom"/>
</dbReference>
<dbReference type="InterPro" id="IPR028082">
    <property type="entry name" value="Peripla_BP_I"/>
</dbReference>
<dbReference type="InterPro" id="IPR014301">
    <property type="entry name" value="TMAO_TorT"/>
</dbReference>
<dbReference type="NCBIfam" id="NF008185">
    <property type="entry name" value="PRK10936.1"/>
    <property type="match status" value="1"/>
</dbReference>
<dbReference type="NCBIfam" id="TIGR02955">
    <property type="entry name" value="TMAO_TorT"/>
    <property type="match status" value="1"/>
</dbReference>
<dbReference type="PANTHER" id="PTHR46847">
    <property type="entry name" value="D-ALLOSE-BINDING PERIPLASMIC PROTEIN-RELATED"/>
    <property type="match status" value="1"/>
</dbReference>
<dbReference type="PANTHER" id="PTHR46847:SF1">
    <property type="entry name" value="D-ALLOSE-BINDING PERIPLASMIC PROTEIN-RELATED"/>
    <property type="match status" value="1"/>
</dbReference>
<dbReference type="Pfam" id="PF00532">
    <property type="entry name" value="Peripla_BP_1"/>
    <property type="match status" value="1"/>
</dbReference>
<dbReference type="SUPFAM" id="SSF53822">
    <property type="entry name" value="Periplasmic binding protein-like I"/>
    <property type="match status" value="1"/>
</dbReference>
<reference key="1">
    <citation type="journal article" date="1994" name="J. Bacteriol.">
        <title>The torR gene of Escherichia coli encodes a response regulator protein involved in the expression of the trimethylamine N-oxide reductase genes.</title>
        <authorList>
            <person name="Simon G."/>
            <person name="Mejean V."/>
            <person name="Jourlin C."/>
            <person name="Chippaux M."/>
            <person name="Pascal M.-C."/>
        </authorList>
    </citation>
    <scope>NUCLEOTIDE SEQUENCE [GENOMIC DNA]</scope>
    <source>
        <strain>K12 / MC4100 / ATCC 35695 / DSM 6574</strain>
    </source>
</reference>
<reference key="2">
    <citation type="journal article" date="1996" name="J. Bacteriol.">
        <title>The periplasmic TorT protein is required for trimethylamine N-oxide reductase gene induction in Escherichia coli.</title>
        <authorList>
            <person name="Jourlin C."/>
            <person name="Simon G."/>
            <person name="Pommier J."/>
            <person name="Chippaux M."/>
            <person name="Mejean V."/>
        </authorList>
    </citation>
    <scope>PROTEIN SEQUENCE OF 19-24</scope>
    <scope>SEQUENCE REVISION TO 29-30</scope>
    <scope>CHARACTERIZATION</scope>
    <source>
        <strain>K12</strain>
    </source>
</reference>
<reference key="3">
    <citation type="journal article" date="1996" name="DNA Res.">
        <title>A 718-kb DNA sequence of the Escherichia coli K-12 genome corresponding to the 12.7-28.0 min region on the linkage map.</title>
        <authorList>
            <person name="Oshima T."/>
            <person name="Aiba H."/>
            <person name="Baba T."/>
            <person name="Fujita K."/>
            <person name="Hayashi K."/>
            <person name="Honjo A."/>
            <person name="Ikemoto K."/>
            <person name="Inada T."/>
            <person name="Itoh T."/>
            <person name="Kajihara M."/>
            <person name="Kanai K."/>
            <person name="Kashimoto K."/>
            <person name="Kimura S."/>
            <person name="Kitagawa M."/>
            <person name="Makino K."/>
            <person name="Masuda S."/>
            <person name="Miki T."/>
            <person name="Mizobuchi K."/>
            <person name="Mori H."/>
            <person name="Motomura K."/>
            <person name="Nakamura Y."/>
            <person name="Nashimoto H."/>
            <person name="Nishio Y."/>
            <person name="Saito N."/>
            <person name="Sampei G."/>
            <person name="Seki Y."/>
            <person name="Tagami H."/>
            <person name="Takemoto K."/>
            <person name="Wada C."/>
            <person name="Yamamoto Y."/>
            <person name="Yano M."/>
            <person name="Horiuchi T."/>
        </authorList>
    </citation>
    <scope>NUCLEOTIDE SEQUENCE [LARGE SCALE GENOMIC DNA]</scope>
    <source>
        <strain>K12 / W3110 / ATCC 27325 / DSM 5911</strain>
    </source>
</reference>
<reference key="4">
    <citation type="journal article" date="1997" name="Science">
        <title>The complete genome sequence of Escherichia coli K-12.</title>
        <authorList>
            <person name="Blattner F.R."/>
            <person name="Plunkett G. III"/>
            <person name="Bloch C.A."/>
            <person name="Perna N.T."/>
            <person name="Burland V."/>
            <person name="Riley M."/>
            <person name="Collado-Vides J."/>
            <person name="Glasner J.D."/>
            <person name="Rode C.K."/>
            <person name="Mayhew G.F."/>
            <person name="Gregor J."/>
            <person name="Davis N.W."/>
            <person name="Kirkpatrick H.A."/>
            <person name="Goeden M.A."/>
            <person name="Rose D.J."/>
            <person name="Mau B."/>
            <person name="Shao Y."/>
        </authorList>
    </citation>
    <scope>NUCLEOTIDE SEQUENCE [LARGE SCALE GENOMIC DNA]</scope>
    <source>
        <strain>K12 / MG1655 / ATCC 47076</strain>
    </source>
</reference>
<reference key="5">
    <citation type="journal article" date="2006" name="Mol. Syst. Biol.">
        <title>Highly accurate genome sequences of Escherichia coli K-12 strains MG1655 and W3110.</title>
        <authorList>
            <person name="Hayashi K."/>
            <person name="Morooka N."/>
            <person name="Yamamoto Y."/>
            <person name="Fujita K."/>
            <person name="Isono K."/>
            <person name="Choi S."/>
            <person name="Ohtsubo E."/>
            <person name="Baba T."/>
            <person name="Wanner B.L."/>
            <person name="Mori H."/>
            <person name="Horiuchi T."/>
        </authorList>
    </citation>
    <scope>NUCLEOTIDE SEQUENCE [LARGE SCALE GENOMIC DNA]</scope>
    <source>
        <strain>K12 / W3110 / ATCC 27325 / DSM 5911</strain>
    </source>
</reference>
<comment type="function">
    <text>Upon binding a putative inducer it probably interacts with TorS and allows it to play a role in the induction of the torCAD operon for trimethylamine N-oxide reductase.</text>
</comment>
<comment type="subcellular location">
    <subcellularLocation>
        <location>Periplasm</location>
    </subcellularLocation>
</comment>
<comment type="similarity">
    <text evidence="2">Belongs to the bacterial solute-binding protein 2 family.</text>
</comment>
<accession>P38683</accession>
<accession>P75888</accession>